<protein>
    <recommendedName>
        <fullName>Triosephosphate isomerase</fullName>
        <shortName>TIM</shortName>
        <ecNumber evidence="6">5.3.1.1</ecNumber>
    </recommendedName>
    <alternativeName>
        <fullName evidence="2">Methylglyoxal synthase</fullName>
        <ecNumber evidence="2">4.2.3.3</ecNumber>
    </alternativeName>
    <alternativeName>
        <fullName>Triose-phosphate isomerase</fullName>
    </alternativeName>
</protein>
<organism>
    <name type="scientific">Gorilla gorilla gorilla</name>
    <name type="common">Western lowland gorilla</name>
    <dbReference type="NCBI Taxonomy" id="9595"/>
    <lineage>
        <taxon>Eukaryota</taxon>
        <taxon>Metazoa</taxon>
        <taxon>Chordata</taxon>
        <taxon>Craniata</taxon>
        <taxon>Vertebrata</taxon>
        <taxon>Euteleostomi</taxon>
        <taxon>Mammalia</taxon>
        <taxon>Eutheria</taxon>
        <taxon>Euarchontoglires</taxon>
        <taxon>Primates</taxon>
        <taxon>Haplorrhini</taxon>
        <taxon>Catarrhini</taxon>
        <taxon>Hominidae</taxon>
        <taxon>Gorilla</taxon>
    </lineage>
</organism>
<proteinExistence type="inferred from homology"/>
<keyword id="KW-0007">Acetylation</keyword>
<keyword id="KW-0963">Cytoplasm</keyword>
<keyword id="KW-0312">Gluconeogenesis</keyword>
<keyword id="KW-0324">Glycolysis</keyword>
<keyword id="KW-0413">Isomerase</keyword>
<keyword id="KW-1017">Isopeptide bond</keyword>
<keyword id="KW-0456">Lyase</keyword>
<keyword id="KW-0488">Methylation</keyword>
<keyword id="KW-0944">Nitration</keyword>
<keyword id="KW-0597">Phosphoprotein</keyword>
<keyword id="KW-1185">Reference proteome</keyword>
<keyword id="KW-0832">Ubl conjugation</keyword>
<evidence type="ECO:0000250" key="1"/>
<evidence type="ECO:0000250" key="2">
    <source>
        <dbReference type="UniProtKB" id="P00939"/>
    </source>
</evidence>
<evidence type="ECO:0000250" key="3">
    <source>
        <dbReference type="UniProtKB" id="P17751"/>
    </source>
</evidence>
<evidence type="ECO:0000250" key="4">
    <source>
        <dbReference type="UniProtKB" id="P48500"/>
    </source>
</evidence>
<evidence type="ECO:0000250" key="5">
    <source>
        <dbReference type="UniProtKB" id="P60174"/>
    </source>
</evidence>
<evidence type="ECO:0000255" key="6">
    <source>
        <dbReference type="PROSITE-ProRule" id="PRU10127"/>
    </source>
</evidence>
<evidence type="ECO:0000305" key="7"/>
<sequence>MAPSRKFFVGGNWKMNGRKQSLGELIGTLNAAKVPADTKVVCAPPTAYIDFARQKLDPKIAVAAQNCYKVTNGAFTGEISPGMIKDCGATWVVLGHSERRHVFGESDELIGQKVAHALAEGLGVIACIGEKLDEREAGITEKVVFEQTKVITDNVKDWSKVVLAYEPVWAIGTGKTATPQQAQEVHEKLRGWLKSNVSDAVAQSTRIIYGGSVTGATCKELASQPDVDGFLVGGASLKPEFVDIINAKQ</sequence>
<dbReference type="EC" id="5.3.1.1" evidence="6"/>
<dbReference type="EC" id="4.2.3.3" evidence="2"/>
<dbReference type="EMBL" id="DQ120713">
    <property type="protein sequence ID" value="ABC40672.1"/>
    <property type="molecule type" value="Genomic_DNA"/>
</dbReference>
<dbReference type="RefSeq" id="XP_018875526.1">
    <property type="nucleotide sequence ID" value="XM_019019981.1"/>
</dbReference>
<dbReference type="SMR" id="Q2QD07"/>
<dbReference type="FunCoup" id="Q2QD07">
    <property type="interactions" value="1401"/>
</dbReference>
<dbReference type="STRING" id="9593.ENSGGOP00000017503"/>
<dbReference type="Ensembl" id="ENSGGOT00000033371.2">
    <property type="protein sequence ID" value="ENSGGOP00000017503.2"/>
    <property type="gene ID" value="ENSGGOG00000023036.2"/>
</dbReference>
<dbReference type="GeneID" id="101144146"/>
<dbReference type="KEGG" id="ggo:101144146"/>
<dbReference type="eggNOG" id="KOG1643">
    <property type="taxonomic scope" value="Eukaryota"/>
</dbReference>
<dbReference type="GeneTree" id="ENSGT00390000013354"/>
<dbReference type="HOGENOM" id="CLU_024251_2_0_1"/>
<dbReference type="InParanoid" id="Q2QD07"/>
<dbReference type="OMA" id="NWKMHMT"/>
<dbReference type="OrthoDB" id="5346at9604"/>
<dbReference type="UniPathway" id="UPA00109">
    <property type="reaction ID" value="UER00189"/>
</dbReference>
<dbReference type="UniPathway" id="UPA00138"/>
<dbReference type="Proteomes" id="UP000001519">
    <property type="component" value="Chromosome 1"/>
</dbReference>
<dbReference type="Bgee" id="ENSGGOG00000023036">
    <property type="expression patterns" value="Expressed in heart and 6 other cell types or tissues"/>
</dbReference>
<dbReference type="GO" id="GO:0005829">
    <property type="term" value="C:cytosol"/>
    <property type="evidence" value="ECO:0000318"/>
    <property type="project" value="GO_Central"/>
</dbReference>
<dbReference type="GO" id="GO:0008929">
    <property type="term" value="F:methylglyoxal synthase activity"/>
    <property type="evidence" value="ECO:0000250"/>
    <property type="project" value="UniProtKB"/>
</dbReference>
<dbReference type="GO" id="GO:0042803">
    <property type="term" value="F:protein homodimerization activity"/>
    <property type="evidence" value="ECO:0000250"/>
    <property type="project" value="UniProtKB"/>
</dbReference>
<dbReference type="GO" id="GO:0004807">
    <property type="term" value="F:triose-phosphate isomerase activity"/>
    <property type="evidence" value="ECO:0000250"/>
    <property type="project" value="UniProtKB"/>
</dbReference>
<dbReference type="GO" id="GO:0006094">
    <property type="term" value="P:gluconeogenesis"/>
    <property type="evidence" value="ECO:0000318"/>
    <property type="project" value="GO_Central"/>
</dbReference>
<dbReference type="GO" id="GO:0046166">
    <property type="term" value="P:glyceraldehyde-3-phosphate biosynthetic process"/>
    <property type="evidence" value="ECO:0000250"/>
    <property type="project" value="UniProtKB"/>
</dbReference>
<dbReference type="GO" id="GO:0019563">
    <property type="term" value="P:glycerol catabolic process"/>
    <property type="evidence" value="ECO:0000318"/>
    <property type="project" value="GO_Central"/>
</dbReference>
<dbReference type="GO" id="GO:0006096">
    <property type="term" value="P:glycolytic process"/>
    <property type="evidence" value="ECO:0000318"/>
    <property type="project" value="GO_Central"/>
</dbReference>
<dbReference type="GO" id="GO:0019242">
    <property type="term" value="P:methylglyoxal biosynthetic process"/>
    <property type="evidence" value="ECO:0000250"/>
    <property type="project" value="UniProtKB"/>
</dbReference>
<dbReference type="CDD" id="cd00311">
    <property type="entry name" value="TIM"/>
    <property type="match status" value="1"/>
</dbReference>
<dbReference type="FunFam" id="3.20.20.70:FF:000025">
    <property type="entry name" value="Triosephosphate isomerase"/>
    <property type="match status" value="1"/>
</dbReference>
<dbReference type="Gene3D" id="3.20.20.70">
    <property type="entry name" value="Aldolase class I"/>
    <property type="match status" value="1"/>
</dbReference>
<dbReference type="HAMAP" id="MF_00147_B">
    <property type="entry name" value="TIM_B"/>
    <property type="match status" value="1"/>
</dbReference>
<dbReference type="InterPro" id="IPR013785">
    <property type="entry name" value="Aldolase_TIM"/>
</dbReference>
<dbReference type="InterPro" id="IPR035990">
    <property type="entry name" value="TIM_sf"/>
</dbReference>
<dbReference type="InterPro" id="IPR022896">
    <property type="entry name" value="TrioseP_Isoase_bac/euk"/>
</dbReference>
<dbReference type="InterPro" id="IPR000652">
    <property type="entry name" value="Triosephosphate_isomerase"/>
</dbReference>
<dbReference type="InterPro" id="IPR020861">
    <property type="entry name" value="Triosephosphate_isomerase_AS"/>
</dbReference>
<dbReference type="NCBIfam" id="TIGR00419">
    <property type="entry name" value="tim"/>
    <property type="match status" value="1"/>
</dbReference>
<dbReference type="PANTHER" id="PTHR21139">
    <property type="entry name" value="TRIOSEPHOSPHATE ISOMERASE"/>
    <property type="match status" value="1"/>
</dbReference>
<dbReference type="PANTHER" id="PTHR21139:SF24">
    <property type="entry name" value="TRIOSEPHOSPHATE ISOMERASE"/>
    <property type="match status" value="1"/>
</dbReference>
<dbReference type="Pfam" id="PF00121">
    <property type="entry name" value="TIM"/>
    <property type="match status" value="1"/>
</dbReference>
<dbReference type="SUPFAM" id="SSF51351">
    <property type="entry name" value="Triosephosphate isomerase (TIM)"/>
    <property type="match status" value="1"/>
</dbReference>
<dbReference type="PROSITE" id="PS00171">
    <property type="entry name" value="TIM_1"/>
    <property type="match status" value="1"/>
</dbReference>
<dbReference type="PROSITE" id="PS51440">
    <property type="entry name" value="TIM_2"/>
    <property type="match status" value="1"/>
</dbReference>
<gene>
    <name type="primary">TPI1</name>
    <name type="synonym">TPI</name>
</gene>
<accession>Q2QD07</accession>
<feature type="initiator methionine" description="Removed" evidence="5">
    <location>
        <position position="1"/>
    </location>
</feature>
<feature type="chain" id="PRO_0000345138" description="Triosephosphate isomerase">
    <location>
        <begin position="2"/>
        <end position="249"/>
    </location>
</feature>
<feature type="active site" description="Electrophile" evidence="1">
    <location>
        <position position="96"/>
    </location>
</feature>
<feature type="active site" description="Proton acceptor" evidence="1">
    <location>
        <position position="166"/>
    </location>
</feature>
<feature type="binding site" evidence="1">
    <location>
        <position position="12"/>
    </location>
    <ligand>
        <name>substrate</name>
    </ligand>
</feature>
<feature type="binding site" evidence="1">
    <location>
        <position position="14"/>
    </location>
    <ligand>
        <name>substrate</name>
    </ligand>
</feature>
<feature type="modified residue" description="N6-acetyllysine" evidence="5">
    <location>
        <position position="14"/>
    </location>
</feature>
<feature type="modified residue" description="3'-nitrotyrosine" evidence="3">
    <location>
        <position position="68"/>
    </location>
</feature>
<feature type="modified residue" description="Phosphoserine" evidence="5">
    <location>
        <position position="80"/>
    </location>
</feature>
<feature type="modified residue" description="Phosphoserine" evidence="4">
    <location>
        <position position="106"/>
    </location>
</feature>
<feature type="modified residue" description="N6-succinyllysine" evidence="3">
    <location>
        <position position="149"/>
    </location>
</feature>
<feature type="modified residue" description="N6-acetyllysine; alternate" evidence="3">
    <location>
        <position position="156"/>
    </location>
</feature>
<feature type="modified residue" description="N6-succinyllysine; alternate" evidence="3">
    <location>
        <position position="156"/>
    </location>
</feature>
<feature type="modified residue" description="Phosphoserine" evidence="3">
    <location>
        <position position="159"/>
    </location>
</feature>
<feature type="modified residue" description="Phosphothreonine" evidence="3">
    <location>
        <position position="173"/>
    </location>
</feature>
<feature type="modified residue" description="N6-acetyllysine; alternate" evidence="5">
    <location>
        <position position="194"/>
    </location>
</feature>
<feature type="modified residue" description="N6-methyllysine; alternate" evidence="5">
    <location>
        <position position="194"/>
    </location>
</feature>
<feature type="modified residue" description="N6-succinyllysine; alternate" evidence="3">
    <location>
        <position position="194"/>
    </location>
</feature>
<feature type="modified residue" description="Phosphoserine" evidence="4">
    <location>
        <position position="198"/>
    </location>
</feature>
<feature type="modified residue" description="3'-nitrotyrosine" evidence="3">
    <location>
        <position position="209"/>
    </location>
</feature>
<feature type="modified residue" description="Phosphoserine" evidence="5">
    <location>
        <position position="212"/>
    </location>
</feature>
<feature type="modified residue" description="Phosphothreonine" evidence="5">
    <location>
        <position position="214"/>
    </location>
</feature>
<feature type="modified residue" description="Phosphoserine" evidence="5">
    <location>
        <position position="223"/>
    </location>
</feature>
<feature type="modified residue" description="N6-acetyllysine" evidence="5">
    <location>
        <position position="238"/>
    </location>
</feature>
<feature type="cross-link" description="Glycyl lysine isopeptide (Lys-Gly) (interchain with G-Cter in SUMO1)" evidence="5">
    <location>
        <position position="142"/>
    </location>
</feature>
<comment type="function">
    <text evidence="2">Triosephosphate isomerase is an extremely efficient metabolic enzyme that catalyzes the interconversion between dihydroxyacetone phosphate (DHAP) and D-glyceraldehyde-3-phosphate (G3P) in glycolysis and gluconeogenesis.</text>
</comment>
<comment type="function">
    <text evidence="2">It is also responsible for the non-negligible production of methylglyoxal a reactive cytotoxic side-product that modifies and can alter proteins, DNA and lipids.</text>
</comment>
<comment type="catalytic activity">
    <reaction evidence="2">
        <text>dihydroxyacetone phosphate = methylglyoxal + phosphate</text>
        <dbReference type="Rhea" id="RHEA:17937"/>
        <dbReference type="ChEBI" id="CHEBI:17158"/>
        <dbReference type="ChEBI" id="CHEBI:43474"/>
        <dbReference type="ChEBI" id="CHEBI:57642"/>
        <dbReference type="EC" id="4.2.3.3"/>
    </reaction>
</comment>
<comment type="catalytic activity">
    <reaction evidence="6">
        <text>D-glyceraldehyde 3-phosphate = dihydroxyacetone phosphate</text>
        <dbReference type="Rhea" id="RHEA:18585"/>
        <dbReference type="ChEBI" id="CHEBI:57642"/>
        <dbReference type="ChEBI" id="CHEBI:59776"/>
        <dbReference type="EC" id="5.3.1.1"/>
    </reaction>
</comment>
<comment type="pathway">
    <text evidence="6">Carbohydrate degradation; glycolysis; D-glyceraldehyde 3-phosphate from glycerone phosphate: step 1/1.</text>
</comment>
<comment type="pathway">
    <text evidence="6">Carbohydrate biosynthesis; gluconeogenesis.</text>
</comment>
<comment type="subunit">
    <text evidence="6">Homodimer.</text>
</comment>
<comment type="subcellular location">
    <subcellularLocation>
        <location evidence="6">Cytoplasm</location>
    </subcellularLocation>
</comment>
<comment type="similarity">
    <text evidence="7">Belongs to the triosephosphate isomerase family.</text>
</comment>
<reference key="1">
    <citation type="journal article" date="2005" name="PLoS Biol.">
        <title>Emergence of young human genes after a burst of retroposition in primates.</title>
        <authorList>
            <person name="Marques A.C."/>
            <person name="Dupanloup I."/>
            <person name="Vinckenbosch N."/>
            <person name="Reymond A."/>
            <person name="Kaessmann H."/>
        </authorList>
    </citation>
    <scope>NUCLEOTIDE SEQUENCE [GENOMIC DNA]</scope>
</reference>
<name>TPIS_GORGO</name>